<feature type="chain" id="PRO_0000329769" description="Polyribonucleotide nucleotidyltransferase">
    <location>
        <begin position="1"/>
        <end position="723"/>
    </location>
</feature>
<feature type="domain" description="KH" evidence="1">
    <location>
        <begin position="564"/>
        <end position="623"/>
    </location>
</feature>
<feature type="domain" description="S1 motif" evidence="1">
    <location>
        <begin position="633"/>
        <end position="701"/>
    </location>
</feature>
<feature type="region of interest" description="Disordered" evidence="2">
    <location>
        <begin position="701"/>
        <end position="723"/>
    </location>
</feature>
<feature type="binding site" evidence="1">
    <location>
        <position position="497"/>
    </location>
    <ligand>
        <name>Mg(2+)</name>
        <dbReference type="ChEBI" id="CHEBI:18420"/>
    </ligand>
</feature>
<feature type="binding site" evidence="1">
    <location>
        <position position="503"/>
    </location>
    <ligand>
        <name>Mg(2+)</name>
        <dbReference type="ChEBI" id="CHEBI:18420"/>
    </ligand>
</feature>
<protein>
    <recommendedName>
        <fullName evidence="1">Polyribonucleotide nucleotidyltransferase</fullName>
        <ecNumber evidence="1">2.7.7.8</ecNumber>
    </recommendedName>
    <alternativeName>
        <fullName evidence="1">Polynucleotide phosphorylase</fullName>
        <shortName evidence="1">PNPase</shortName>
    </alternativeName>
</protein>
<proteinExistence type="inferred from homology"/>
<organism>
    <name type="scientific">Prochlorococcus marinus (strain MIT 9313)</name>
    <dbReference type="NCBI Taxonomy" id="74547"/>
    <lineage>
        <taxon>Bacteria</taxon>
        <taxon>Bacillati</taxon>
        <taxon>Cyanobacteriota</taxon>
        <taxon>Cyanophyceae</taxon>
        <taxon>Synechococcales</taxon>
        <taxon>Prochlorococcaceae</taxon>
        <taxon>Prochlorococcus</taxon>
    </lineage>
</organism>
<keyword id="KW-0963">Cytoplasm</keyword>
<keyword id="KW-0460">Magnesium</keyword>
<keyword id="KW-0479">Metal-binding</keyword>
<keyword id="KW-0548">Nucleotidyltransferase</keyword>
<keyword id="KW-1185">Reference proteome</keyword>
<keyword id="KW-0694">RNA-binding</keyword>
<keyword id="KW-0808">Transferase</keyword>
<dbReference type="EC" id="2.7.7.8" evidence="1"/>
<dbReference type="EMBL" id="BX548175">
    <property type="protein sequence ID" value="CAE21552.1"/>
    <property type="molecule type" value="Genomic_DNA"/>
</dbReference>
<dbReference type="RefSeq" id="WP_011130745.1">
    <property type="nucleotide sequence ID" value="NC_005071.1"/>
</dbReference>
<dbReference type="SMR" id="Q7V606"/>
<dbReference type="KEGG" id="pmt:PMT_1377"/>
<dbReference type="eggNOG" id="COG1185">
    <property type="taxonomic scope" value="Bacteria"/>
</dbReference>
<dbReference type="HOGENOM" id="CLU_004217_2_2_3"/>
<dbReference type="OrthoDB" id="9804305at2"/>
<dbReference type="Proteomes" id="UP000001423">
    <property type="component" value="Chromosome"/>
</dbReference>
<dbReference type="GO" id="GO:0005829">
    <property type="term" value="C:cytosol"/>
    <property type="evidence" value="ECO:0007669"/>
    <property type="project" value="TreeGrafter"/>
</dbReference>
<dbReference type="GO" id="GO:0000175">
    <property type="term" value="F:3'-5'-RNA exonuclease activity"/>
    <property type="evidence" value="ECO:0007669"/>
    <property type="project" value="TreeGrafter"/>
</dbReference>
<dbReference type="GO" id="GO:0000287">
    <property type="term" value="F:magnesium ion binding"/>
    <property type="evidence" value="ECO:0007669"/>
    <property type="project" value="UniProtKB-UniRule"/>
</dbReference>
<dbReference type="GO" id="GO:0004654">
    <property type="term" value="F:polyribonucleotide nucleotidyltransferase activity"/>
    <property type="evidence" value="ECO:0007669"/>
    <property type="project" value="UniProtKB-UniRule"/>
</dbReference>
<dbReference type="GO" id="GO:0003723">
    <property type="term" value="F:RNA binding"/>
    <property type="evidence" value="ECO:0007669"/>
    <property type="project" value="UniProtKB-UniRule"/>
</dbReference>
<dbReference type="GO" id="GO:0006402">
    <property type="term" value="P:mRNA catabolic process"/>
    <property type="evidence" value="ECO:0007669"/>
    <property type="project" value="UniProtKB-UniRule"/>
</dbReference>
<dbReference type="GO" id="GO:0006396">
    <property type="term" value="P:RNA processing"/>
    <property type="evidence" value="ECO:0007669"/>
    <property type="project" value="InterPro"/>
</dbReference>
<dbReference type="CDD" id="cd02393">
    <property type="entry name" value="KH-I_PNPase"/>
    <property type="match status" value="1"/>
</dbReference>
<dbReference type="CDD" id="cd11363">
    <property type="entry name" value="RNase_PH_PNPase_1"/>
    <property type="match status" value="1"/>
</dbReference>
<dbReference type="CDD" id="cd11364">
    <property type="entry name" value="RNase_PH_PNPase_2"/>
    <property type="match status" value="1"/>
</dbReference>
<dbReference type="FunFam" id="3.30.1370.10:FF:000001">
    <property type="entry name" value="Polyribonucleotide nucleotidyltransferase"/>
    <property type="match status" value="1"/>
</dbReference>
<dbReference type="FunFam" id="3.30.230.70:FF:000001">
    <property type="entry name" value="Polyribonucleotide nucleotidyltransferase"/>
    <property type="match status" value="1"/>
</dbReference>
<dbReference type="FunFam" id="3.30.230.70:FF:000002">
    <property type="entry name" value="Polyribonucleotide nucleotidyltransferase"/>
    <property type="match status" value="1"/>
</dbReference>
<dbReference type="FunFam" id="2.40.50.140:FF:000189">
    <property type="entry name" value="Polyribonucleotide nucleotidyltransferase, putative"/>
    <property type="match status" value="1"/>
</dbReference>
<dbReference type="Gene3D" id="3.30.230.70">
    <property type="entry name" value="GHMP Kinase, N-terminal domain"/>
    <property type="match status" value="2"/>
</dbReference>
<dbReference type="Gene3D" id="3.30.1370.10">
    <property type="entry name" value="K Homology domain, type 1"/>
    <property type="match status" value="1"/>
</dbReference>
<dbReference type="Gene3D" id="2.40.50.140">
    <property type="entry name" value="Nucleic acid-binding proteins"/>
    <property type="match status" value="1"/>
</dbReference>
<dbReference type="HAMAP" id="MF_01595">
    <property type="entry name" value="PNPase"/>
    <property type="match status" value="1"/>
</dbReference>
<dbReference type="InterPro" id="IPR001247">
    <property type="entry name" value="ExoRNase_PH_dom1"/>
</dbReference>
<dbReference type="InterPro" id="IPR015847">
    <property type="entry name" value="ExoRNase_PH_dom2"/>
</dbReference>
<dbReference type="InterPro" id="IPR036345">
    <property type="entry name" value="ExoRNase_PH_dom2_sf"/>
</dbReference>
<dbReference type="InterPro" id="IPR004087">
    <property type="entry name" value="KH_dom"/>
</dbReference>
<dbReference type="InterPro" id="IPR004088">
    <property type="entry name" value="KH_dom_type_1"/>
</dbReference>
<dbReference type="InterPro" id="IPR036612">
    <property type="entry name" value="KH_dom_type_1_sf"/>
</dbReference>
<dbReference type="InterPro" id="IPR012340">
    <property type="entry name" value="NA-bd_OB-fold"/>
</dbReference>
<dbReference type="InterPro" id="IPR012162">
    <property type="entry name" value="PNPase"/>
</dbReference>
<dbReference type="InterPro" id="IPR027408">
    <property type="entry name" value="PNPase/RNase_PH_dom_sf"/>
</dbReference>
<dbReference type="InterPro" id="IPR015848">
    <property type="entry name" value="PNPase_PH_RNA-bd_bac/org-type"/>
</dbReference>
<dbReference type="InterPro" id="IPR020568">
    <property type="entry name" value="Ribosomal_Su5_D2-typ_SF"/>
</dbReference>
<dbReference type="InterPro" id="IPR003029">
    <property type="entry name" value="S1_domain"/>
</dbReference>
<dbReference type="NCBIfam" id="TIGR03591">
    <property type="entry name" value="polynuc_phos"/>
    <property type="match status" value="1"/>
</dbReference>
<dbReference type="NCBIfam" id="NF008805">
    <property type="entry name" value="PRK11824.1"/>
    <property type="match status" value="1"/>
</dbReference>
<dbReference type="PANTHER" id="PTHR11252">
    <property type="entry name" value="POLYRIBONUCLEOTIDE NUCLEOTIDYLTRANSFERASE"/>
    <property type="match status" value="1"/>
</dbReference>
<dbReference type="PANTHER" id="PTHR11252:SF0">
    <property type="entry name" value="POLYRIBONUCLEOTIDE NUCLEOTIDYLTRANSFERASE 1, MITOCHONDRIAL"/>
    <property type="match status" value="1"/>
</dbReference>
<dbReference type="Pfam" id="PF00013">
    <property type="entry name" value="KH_1"/>
    <property type="match status" value="1"/>
</dbReference>
<dbReference type="Pfam" id="PF03726">
    <property type="entry name" value="PNPase"/>
    <property type="match status" value="1"/>
</dbReference>
<dbReference type="Pfam" id="PF01138">
    <property type="entry name" value="RNase_PH"/>
    <property type="match status" value="2"/>
</dbReference>
<dbReference type="Pfam" id="PF03725">
    <property type="entry name" value="RNase_PH_C"/>
    <property type="match status" value="2"/>
</dbReference>
<dbReference type="Pfam" id="PF00575">
    <property type="entry name" value="S1"/>
    <property type="match status" value="1"/>
</dbReference>
<dbReference type="PIRSF" id="PIRSF005499">
    <property type="entry name" value="PNPase"/>
    <property type="match status" value="1"/>
</dbReference>
<dbReference type="SMART" id="SM00322">
    <property type="entry name" value="KH"/>
    <property type="match status" value="1"/>
</dbReference>
<dbReference type="SMART" id="SM00316">
    <property type="entry name" value="S1"/>
    <property type="match status" value="1"/>
</dbReference>
<dbReference type="SUPFAM" id="SSF54791">
    <property type="entry name" value="Eukaryotic type KH-domain (KH-domain type I)"/>
    <property type="match status" value="1"/>
</dbReference>
<dbReference type="SUPFAM" id="SSF50249">
    <property type="entry name" value="Nucleic acid-binding proteins"/>
    <property type="match status" value="1"/>
</dbReference>
<dbReference type="SUPFAM" id="SSF55666">
    <property type="entry name" value="Ribonuclease PH domain 2-like"/>
    <property type="match status" value="2"/>
</dbReference>
<dbReference type="SUPFAM" id="SSF54211">
    <property type="entry name" value="Ribosomal protein S5 domain 2-like"/>
    <property type="match status" value="2"/>
</dbReference>
<dbReference type="PROSITE" id="PS50084">
    <property type="entry name" value="KH_TYPE_1"/>
    <property type="match status" value="1"/>
</dbReference>
<dbReference type="PROSITE" id="PS50126">
    <property type="entry name" value="S1"/>
    <property type="match status" value="1"/>
</dbReference>
<name>PNP_PROMM</name>
<reference key="1">
    <citation type="journal article" date="2003" name="Nature">
        <title>Genome divergence in two Prochlorococcus ecotypes reflects oceanic niche differentiation.</title>
        <authorList>
            <person name="Rocap G."/>
            <person name="Larimer F.W."/>
            <person name="Lamerdin J.E."/>
            <person name="Malfatti S."/>
            <person name="Chain P."/>
            <person name="Ahlgren N.A."/>
            <person name="Arellano A."/>
            <person name="Coleman M."/>
            <person name="Hauser L."/>
            <person name="Hess W.R."/>
            <person name="Johnson Z.I."/>
            <person name="Land M.L."/>
            <person name="Lindell D."/>
            <person name="Post A.F."/>
            <person name="Regala W."/>
            <person name="Shah M."/>
            <person name="Shaw S.L."/>
            <person name="Steglich C."/>
            <person name="Sullivan M.B."/>
            <person name="Ting C.S."/>
            <person name="Tolonen A."/>
            <person name="Webb E.A."/>
            <person name="Zinser E.R."/>
            <person name="Chisholm S.W."/>
        </authorList>
    </citation>
    <scope>NUCLEOTIDE SEQUENCE [LARGE SCALE GENOMIC DNA]</scope>
    <source>
        <strain>MIT 9313</strain>
    </source>
</reference>
<accession>Q7V606</accession>
<sequence length="723" mass="78164">MQGQTQSISFDGREIRLTTGRYAPQAGGSVMMECGDTAVLVTATRSTGREGIDFLPLICDYEERLYAAGRIPGSFMRREGRPPERATLIARLIDRPMRPLFPSWMRDDLQIVATCLSLDERVPADVLAVTGASMATLLASIPFQGPMAAVRVGLLGDDFVLNPSYREIERGDLDLVVAGTPDGVVMVEAGANQLPQGDVIEAIDFGYEAVCELIKAQQTILKDAGIKQVQPEPPTQDQDTKLSTYLEKNCSKSIGEVLKQFEQTKAERDSKLDAIKAKTAEAIDSLKEDDAVRKSVNANSKVLSNNFKALTKKLMREQIIKQGKRVDGRKLDEVRPISSAAGVLPKRVHGSGLFQRGLTQVLSTATLGTPSDAQEMDDLNPGPEKTYLHHYNFPPYSVGETRPMRSPGRREVGHGSLAERAIIPVLPPKDSFPYVLRVVSEVLSSNGSTSMGSVCGSTLALMDAGVPLKAPVSGAAMGLIKEDAEIRILTDIQGIEDFLGDMDFKVAGTKDGITALQMDMKITGLPVKTIAEAVNQARPARIHILEKMLEAIDAPRTTLSPHAPRLLSFRIDPELIGTVIGPGGRTIKGITERTNTKIDIEDGGIVTIASHDGAAAEAAQRIIEGLTRKVNEGEVFTGTITRIIPIGAFVEILPGKEGMIHISQLSEARVEKVDDVVKVGDQVTVRIREIDNRGRINLTLRGVPQNGEETQSEPAPTPVAPLN</sequence>
<gene>
    <name evidence="1" type="primary">pnp</name>
    <name type="ordered locus">PMT_1377</name>
</gene>
<comment type="function">
    <text evidence="1">Involved in mRNA degradation. Catalyzes the phosphorolysis of single-stranded polyribonucleotides processively in the 3'- to 5'-direction.</text>
</comment>
<comment type="catalytic activity">
    <reaction evidence="1">
        <text>RNA(n+1) + phosphate = RNA(n) + a ribonucleoside 5'-diphosphate</text>
        <dbReference type="Rhea" id="RHEA:22096"/>
        <dbReference type="Rhea" id="RHEA-COMP:14527"/>
        <dbReference type="Rhea" id="RHEA-COMP:17342"/>
        <dbReference type="ChEBI" id="CHEBI:43474"/>
        <dbReference type="ChEBI" id="CHEBI:57930"/>
        <dbReference type="ChEBI" id="CHEBI:140395"/>
        <dbReference type="EC" id="2.7.7.8"/>
    </reaction>
</comment>
<comment type="cofactor">
    <cofactor evidence="1">
        <name>Mg(2+)</name>
        <dbReference type="ChEBI" id="CHEBI:18420"/>
    </cofactor>
</comment>
<comment type="subcellular location">
    <subcellularLocation>
        <location evidence="1">Cytoplasm</location>
    </subcellularLocation>
</comment>
<comment type="similarity">
    <text evidence="1">Belongs to the polyribonucleotide nucleotidyltransferase family.</text>
</comment>
<evidence type="ECO:0000255" key="1">
    <source>
        <dbReference type="HAMAP-Rule" id="MF_01595"/>
    </source>
</evidence>
<evidence type="ECO:0000256" key="2">
    <source>
        <dbReference type="SAM" id="MobiDB-lite"/>
    </source>
</evidence>